<accession>P49911</accession>
<reference key="1">
    <citation type="journal article" date="1994" name="Proc. Natl. Acad. Sci. U.S.A.">
        <title>A nuclear factor containing the leucine-rich repeats expressed in murine cerebellar neurons.</title>
        <authorList>
            <person name="Matsuoka K."/>
            <person name="Taoka M."/>
            <person name="Satozawa N."/>
            <person name="Nakayama H."/>
            <person name="Ichimura T."/>
            <person name="Takahashi N."/>
            <person name="Yamakuni T."/>
            <person name="Song S.-Y."/>
            <person name="Isobe T."/>
        </authorList>
    </citation>
    <scope>NUCLEOTIDE SEQUENCE [MRNA]</scope>
    <scope>TISSUE SPECIFICITY</scope>
    <scope>DEVELOPMENTAL STAGE</scope>
    <source>
        <strain>Wistar</strain>
        <tissue>Brain</tissue>
    </source>
</reference>
<reference key="2">
    <citation type="journal article" date="2005" name="Cerebellum">
        <title>The Anp32 family of proteins containing leucine-rich repeats.</title>
        <authorList>
            <person name="Matilla A."/>
            <person name="Radrizzani M."/>
        </authorList>
    </citation>
    <scope>GENE FAMILY</scope>
    <scope>NOMENCLATURE</scope>
</reference>
<protein>
    <recommendedName>
        <fullName>Acidic leucine-rich nuclear phosphoprotein 32 family member A</fullName>
    </recommendedName>
    <alternativeName>
        <fullName>Leucine-rich acidic nuclear protein</fullName>
        <shortName>LANP</shortName>
    </alternativeName>
</protein>
<name>AN32A_RAT</name>
<proteinExistence type="evidence at transcript level"/>
<evidence type="ECO:0000250" key="1"/>
<evidence type="ECO:0000250" key="2">
    <source>
        <dbReference type="UniProtKB" id="P39687"/>
    </source>
</evidence>
<evidence type="ECO:0000256" key="3">
    <source>
        <dbReference type="SAM" id="MobiDB-lite"/>
    </source>
</evidence>
<evidence type="ECO:0000269" key="4">
    <source>
    </source>
</evidence>
<evidence type="ECO:0000305" key="5"/>
<dbReference type="EMBL" id="D32209">
    <property type="protein sequence ID" value="BAA06908.1"/>
    <property type="molecule type" value="mRNA"/>
</dbReference>
<dbReference type="PIR" id="I59334">
    <property type="entry name" value="I59334"/>
</dbReference>
<dbReference type="RefSeq" id="NP_037035.1">
    <property type="nucleotide sequence ID" value="NM_012903.1"/>
</dbReference>
<dbReference type="BMRB" id="P49911"/>
<dbReference type="SMR" id="P49911"/>
<dbReference type="BioGRID" id="247418">
    <property type="interactions" value="3"/>
</dbReference>
<dbReference type="FunCoup" id="P49911">
    <property type="interactions" value="2821"/>
</dbReference>
<dbReference type="IntAct" id="P49911">
    <property type="interactions" value="2"/>
</dbReference>
<dbReference type="MINT" id="P49911"/>
<dbReference type="STRING" id="10116.ENSRNOP00000020443"/>
<dbReference type="iPTMnet" id="P49911"/>
<dbReference type="PhosphoSitePlus" id="P49911"/>
<dbReference type="SwissPalm" id="P49911"/>
<dbReference type="jPOST" id="P49911"/>
<dbReference type="PaxDb" id="10116-ENSRNOP00000066098"/>
<dbReference type="GeneID" id="25379"/>
<dbReference type="KEGG" id="rno:25379"/>
<dbReference type="UCSC" id="RGD:2116">
    <property type="organism name" value="rat"/>
</dbReference>
<dbReference type="AGR" id="RGD:11508551"/>
<dbReference type="CTD" id="8125"/>
<dbReference type="RGD" id="11508551">
    <property type="gene designation" value="Anp32a"/>
</dbReference>
<dbReference type="eggNOG" id="KOG2739">
    <property type="taxonomic scope" value="Eukaryota"/>
</dbReference>
<dbReference type="InParanoid" id="P49911"/>
<dbReference type="PhylomeDB" id="P49911"/>
<dbReference type="Reactome" id="R-RNO-450520">
    <property type="pathway name" value="HuR (ELAVL1) binds and stabilizes mRNA"/>
</dbReference>
<dbReference type="PRO" id="PR:P49911"/>
<dbReference type="Proteomes" id="UP000002494">
    <property type="component" value="Unplaced"/>
</dbReference>
<dbReference type="GO" id="GO:0000785">
    <property type="term" value="C:chromatin"/>
    <property type="evidence" value="ECO:0000314"/>
    <property type="project" value="RGD"/>
</dbReference>
<dbReference type="GO" id="GO:0005737">
    <property type="term" value="C:cytoplasm"/>
    <property type="evidence" value="ECO:0000250"/>
    <property type="project" value="UniProtKB"/>
</dbReference>
<dbReference type="GO" id="GO:0005783">
    <property type="term" value="C:endoplasmic reticulum"/>
    <property type="evidence" value="ECO:0000250"/>
    <property type="project" value="UniProtKB"/>
</dbReference>
<dbReference type="GO" id="GO:0016363">
    <property type="term" value="C:nuclear matrix"/>
    <property type="evidence" value="ECO:0000266"/>
    <property type="project" value="RGD"/>
</dbReference>
<dbReference type="GO" id="GO:0005634">
    <property type="term" value="C:nucleus"/>
    <property type="evidence" value="ECO:0000250"/>
    <property type="project" value="UniProtKB"/>
</dbReference>
<dbReference type="GO" id="GO:0048471">
    <property type="term" value="C:perinuclear region of cytoplasm"/>
    <property type="evidence" value="ECO:0000250"/>
    <property type="project" value="UniProtKB"/>
</dbReference>
<dbReference type="GO" id="GO:0050839">
    <property type="term" value="F:cell adhesion molecule binding"/>
    <property type="evidence" value="ECO:0000353"/>
    <property type="project" value="RGD"/>
</dbReference>
<dbReference type="GO" id="GO:0042393">
    <property type="term" value="F:histone binding"/>
    <property type="evidence" value="ECO:0000318"/>
    <property type="project" value="GO_Central"/>
</dbReference>
<dbReference type="GO" id="GO:0005178">
    <property type="term" value="F:integrin binding"/>
    <property type="evidence" value="ECO:0000353"/>
    <property type="project" value="RGD"/>
</dbReference>
<dbReference type="GO" id="GO:0120033">
    <property type="term" value="P:negative regulation of plasma membrane bounded cell projection assembly"/>
    <property type="evidence" value="ECO:0000315"/>
    <property type="project" value="RGD"/>
</dbReference>
<dbReference type="GO" id="GO:0006913">
    <property type="term" value="P:nucleocytoplasmic transport"/>
    <property type="evidence" value="ECO:0000250"/>
    <property type="project" value="UniProtKB"/>
</dbReference>
<dbReference type="GO" id="GO:0042981">
    <property type="term" value="P:regulation of apoptotic process"/>
    <property type="evidence" value="ECO:0000318"/>
    <property type="project" value="GO_Central"/>
</dbReference>
<dbReference type="FunFam" id="3.80.10.10:FF:000003">
    <property type="entry name" value="Acidic leucine-rich nuclear phosphoprotein 32 family member A"/>
    <property type="match status" value="1"/>
</dbReference>
<dbReference type="Gene3D" id="3.80.10.10">
    <property type="entry name" value="Ribonuclease Inhibitor"/>
    <property type="match status" value="1"/>
</dbReference>
<dbReference type="InterPro" id="IPR045081">
    <property type="entry name" value="AN32"/>
</dbReference>
<dbReference type="InterPro" id="IPR001611">
    <property type="entry name" value="Leu-rich_rpt"/>
</dbReference>
<dbReference type="InterPro" id="IPR032675">
    <property type="entry name" value="LRR_dom_sf"/>
</dbReference>
<dbReference type="PANTHER" id="PTHR11375">
    <property type="entry name" value="ACIDIC LEUCINE-RICH NUCLEAR PHOSPHOPROTEIN 32"/>
    <property type="match status" value="1"/>
</dbReference>
<dbReference type="PANTHER" id="PTHR11375:SF1">
    <property type="entry name" value="ACIDIC LEUCINE-RICH NUCLEAR PHOSPHOPROTEIN 32 FAMILY MEMBER A"/>
    <property type="match status" value="1"/>
</dbReference>
<dbReference type="Pfam" id="PF14580">
    <property type="entry name" value="LRR_9"/>
    <property type="match status" value="1"/>
</dbReference>
<dbReference type="SUPFAM" id="SSF52058">
    <property type="entry name" value="L domain-like"/>
    <property type="match status" value="1"/>
</dbReference>
<dbReference type="PROSITE" id="PS51450">
    <property type="entry name" value="LRR"/>
    <property type="match status" value="4"/>
</dbReference>
<organism>
    <name type="scientific">Rattus norvegicus</name>
    <name type="common">Rat</name>
    <dbReference type="NCBI Taxonomy" id="10116"/>
    <lineage>
        <taxon>Eukaryota</taxon>
        <taxon>Metazoa</taxon>
        <taxon>Chordata</taxon>
        <taxon>Craniata</taxon>
        <taxon>Vertebrata</taxon>
        <taxon>Euteleostomi</taxon>
        <taxon>Mammalia</taxon>
        <taxon>Eutheria</taxon>
        <taxon>Euarchontoglires</taxon>
        <taxon>Glires</taxon>
        <taxon>Rodentia</taxon>
        <taxon>Myomorpha</taxon>
        <taxon>Muroidea</taxon>
        <taxon>Muridae</taxon>
        <taxon>Murinae</taxon>
        <taxon>Rattus</taxon>
    </lineage>
</organism>
<gene>
    <name type="primary">Anp32a</name>
    <name type="synonym">Lanp</name>
</gene>
<sequence>MEMDKRIYLELRNRTPSDVKELVLDNCRSIEGKIEGLTDEFEELEFLSTINVGLTSISNLPKLNKLKKLELSENRISGDLEVLAEKCPNLKHLNLSGNKIKDLSTIEPLKKLENLKSLDLFNCEVTNLNAYRENVFKLLPQVMYLDGYDRDNKEAPDSDVEGYVEDDDEEDEDEEEYDEYAQLVEDEEEEDEEEEGEEEDVSGEEEEDEEGYNDGEVDDEEDEEDAAEEEGSQKRKREPDDEGQEDD</sequence>
<keyword id="KW-0963">Cytoplasm</keyword>
<keyword id="KW-0256">Endoplasmic reticulum</keyword>
<keyword id="KW-0433">Leucine-rich repeat</keyword>
<keyword id="KW-0539">Nucleus</keyword>
<keyword id="KW-0597">Phosphoprotein</keyword>
<keyword id="KW-1185">Reference proteome</keyword>
<keyword id="KW-0677">Repeat</keyword>
<keyword id="KW-0678">Repressor</keyword>
<keyword id="KW-0804">Transcription</keyword>
<keyword id="KW-0805">Transcription regulation</keyword>
<feature type="chain" id="PRO_0000137594" description="Acidic leucine-rich nuclear phosphoprotein 32 family member A">
    <location>
        <begin position="1"/>
        <end position="247"/>
    </location>
</feature>
<feature type="repeat" description="LRR 1">
    <location>
        <begin position="18"/>
        <end position="41"/>
    </location>
</feature>
<feature type="repeat" description="LRR 2">
    <location>
        <begin position="43"/>
        <end position="64"/>
    </location>
</feature>
<feature type="repeat" description="LRR 3">
    <location>
        <begin position="65"/>
        <end position="87"/>
    </location>
</feature>
<feature type="repeat" description="LRR 4">
    <location>
        <begin position="89"/>
        <end position="110"/>
    </location>
</feature>
<feature type="domain" description="LRRCT">
    <location>
        <begin position="123"/>
        <end position="161"/>
    </location>
</feature>
<feature type="region of interest" description="Disordered" evidence="3">
    <location>
        <begin position="150"/>
        <end position="247"/>
    </location>
</feature>
<feature type="region of interest" description="Necessary for tumor-suppressive function" evidence="1">
    <location>
        <begin position="150"/>
        <end position="172"/>
    </location>
</feature>
<feature type="region of interest" description="Interaction with E4F1" evidence="1">
    <location>
        <begin position="165"/>
        <end position="247"/>
    </location>
</feature>
<feature type="compositionally biased region" description="Acidic residues" evidence="3">
    <location>
        <begin position="157"/>
        <end position="230"/>
    </location>
</feature>
<feature type="modified residue" description="Phosphothreonine" evidence="2">
    <location>
        <position position="15"/>
    </location>
</feature>
<feature type="modified residue" description="Phosphoserine" evidence="2">
    <location>
        <position position="17"/>
    </location>
</feature>
<feature type="modified residue" description="Phosphoserine" evidence="2">
    <location>
        <position position="158"/>
    </location>
</feature>
<feature type="modified residue" description="Phosphoserine" evidence="2">
    <location>
        <position position="202"/>
    </location>
</feature>
<comment type="function">
    <text evidence="2">Multifunctional protein that is involved in the regulation of many processes including tumor suppression, apoptosis, cell cycle progression or transcription. Promotes apoptosis by favouring the activation of caspase-9/CASP9 and allowing apoptosome formation. In addition, plays a role in the modulation of histone acetylation and transcription as part of the INHAT (inhibitor of histone acetyltransferases) complex. Inhibits the histone-acetyltranferase activity of EP300/CREBBP (CREB-binding protein) and EP300/CREBBP-associated factor by histone masking. Preferentially binds to unmodified histone H3 and sterically inhibiting its acetylation and phosphorylation leading to cell growth inhibition. Participates in other biochemical processes such as regulation of mRNA nuclear-to-cytoplasmic translocation and stability by its association with ELAVL1 (Hu-antigen R). Plays a role in E4F1-mediated transcriptional repression as well as inhibition of protein phosphatase 2A.</text>
</comment>
<comment type="subunit">
    <text evidence="1">Component of the SET complex, composed of at least ANP32A, APEX1, HMGB2, NME1, SET and TREX1. Directly interacts with SET. Interacts with ATXN1/SCA1. Interacts with MAP1B. Interacts with ELAVL1. Part of the INHAT (inhibitor of histone acetyltransferases) complex. Interacts with E4F1 (By similarity).</text>
</comment>
<comment type="subcellular location">
    <subcellularLocation>
        <location evidence="1">Nucleus</location>
    </subcellularLocation>
    <subcellularLocation>
        <location evidence="1">Cytoplasm</location>
    </subcellularLocation>
    <subcellularLocation>
        <location evidence="1">Endoplasmic reticulum</location>
    </subcellularLocation>
    <text evidence="1">Translocates to the cytoplasm during the process of neuritogenesis. Shuttles between nucleus and cytoplasm (By similarity).</text>
</comment>
<comment type="tissue specificity">
    <text evidence="4">Widely distributed in the central nervous system, with an abundant expression in the cerebellum.</text>
</comment>
<comment type="developmental stage">
    <text evidence="4">It is moderately expressed in the cerebellum on postnatal day 7 in the external granule and Perkinje cells, increases in the second postnatal week and thereafter decreases to an adult level.</text>
</comment>
<comment type="PTM">
    <text evidence="2">Phosphorylated on serine residues, at least in part by casein kinase 2/CK2.</text>
</comment>
<comment type="PTM">
    <text evidence="1">Some glutamate residues are glycylated by TTLL8. This modification occurs exclusively on glutamate residues and results in a glycine chain on the gamma-carboxyl group (By similarity).</text>
</comment>
<comment type="similarity">
    <text evidence="5">Belongs to the ANP32 family.</text>
</comment>